<organism>
    <name type="scientific">Pseudomonas fluorescens (strain SBW25)</name>
    <dbReference type="NCBI Taxonomy" id="216595"/>
    <lineage>
        <taxon>Bacteria</taxon>
        <taxon>Pseudomonadati</taxon>
        <taxon>Pseudomonadota</taxon>
        <taxon>Gammaproteobacteria</taxon>
        <taxon>Pseudomonadales</taxon>
        <taxon>Pseudomonadaceae</taxon>
        <taxon>Pseudomonas</taxon>
    </lineage>
</organism>
<evidence type="ECO:0000255" key="1">
    <source>
        <dbReference type="HAMAP-Rule" id="MF_00298"/>
    </source>
</evidence>
<name>RPPH_PSEFS</name>
<protein>
    <recommendedName>
        <fullName evidence="1">RNA pyrophosphohydrolase</fullName>
        <ecNumber evidence="1">3.6.1.-</ecNumber>
    </recommendedName>
    <alternativeName>
        <fullName evidence="1">(Di)nucleoside polyphosphate hydrolase</fullName>
    </alternativeName>
</protein>
<comment type="function">
    <text evidence="1">Accelerates the degradation of transcripts by removing pyrophosphate from the 5'-end of triphosphorylated RNA, leading to a more labile monophosphorylated state that can stimulate subsequent ribonuclease cleavage.</text>
</comment>
<comment type="cofactor">
    <cofactor evidence="1">
        <name>a divalent metal cation</name>
        <dbReference type="ChEBI" id="CHEBI:60240"/>
    </cofactor>
</comment>
<comment type="similarity">
    <text evidence="1">Belongs to the Nudix hydrolase family. RppH subfamily.</text>
</comment>
<dbReference type="EC" id="3.6.1.-" evidence="1"/>
<dbReference type="EMBL" id="AM181176">
    <property type="protein sequence ID" value="CAY53240.1"/>
    <property type="molecule type" value="Genomic_DNA"/>
</dbReference>
<dbReference type="RefSeq" id="WP_003176750.1">
    <property type="nucleotide sequence ID" value="NC_012660.1"/>
</dbReference>
<dbReference type="SMR" id="C3K3R3"/>
<dbReference type="STRING" id="294.SRM1_05527"/>
<dbReference type="eggNOG" id="COG0494">
    <property type="taxonomic scope" value="Bacteria"/>
</dbReference>
<dbReference type="HOGENOM" id="CLU_087195_3_1_6"/>
<dbReference type="OrthoDB" id="9816040at2"/>
<dbReference type="GO" id="GO:0005737">
    <property type="term" value="C:cytoplasm"/>
    <property type="evidence" value="ECO:0007669"/>
    <property type="project" value="TreeGrafter"/>
</dbReference>
<dbReference type="GO" id="GO:0046872">
    <property type="term" value="F:metal ion binding"/>
    <property type="evidence" value="ECO:0007669"/>
    <property type="project" value="UniProtKB-KW"/>
</dbReference>
<dbReference type="GO" id="GO:0034353">
    <property type="term" value="F:mRNA 5'-diphosphatase activity"/>
    <property type="evidence" value="ECO:0007669"/>
    <property type="project" value="TreeGrafter"/>
</dbReference>
<dbReference type="GO" id="GO:0006402">
    <property type="term" value="P:mRNA catabolic process"/>
    <property type="evidence" value="ECO:0007669"/>
    <property type="project" value="TreeGrafter"/>
</dbReference>
<dbReference type="CDD" id="cd03671">
    <property type="entry name" value="NUDIX_Ap4A_hydrolase_plant_like"/>
    <property type="match status" value="1"/>
</dbReference>
<dbReference type="FunFam" id="3.90.79.10:FF:000001">
    <property type="entry name" value="RNA pyrophosphohydrolase"/>
    <property type="match status" value="1"/>
</dbReference>
<dbReference type="Gene3D" id="3.90.79.10">
    <property type="entry name" value="Nucleoside Triphosphate Pyrophosphohydrolase"/>
    <property type="match status" value="1"/>
</dbReference>
<dbReference type="HAMAP" id="MF_00298">
    <property type="entry name" value="Nudix_RppH"/>
    <property type="match status" value="1"/>
</dbReference>
<dbReference type="InterPro" id="IPR020476">
    <property type="entry name" value="Nudix_hydrolase"/>
</dbReference>
<dbReference type="InterPro" id="IPR015797">
    <property type="entry name" value="NUDIX_hydrolase-like_dom_sf"/>
</dbReference>
<dbReference type="InterPro" id="IPR020084">
    <property type="entry name" value="NUDIX_hydrolase_CS"/>
</dbReference>
<dbReference type="InterPro" id="IPR000086">
    <property type="entry name" value="NUDIX_hydrolase_dom"/>
</dbReference>
<dbReference type="InterPro" id="IPR022927">
    <property type="entry name" value="RppH"/>
</dbReference>
<dbReference type="NCBIfam" id="NF001934">
    <property type="entry name" value="PRK00714.1-1"/>
    <property type="match status" value="1"/>
</dbReference>
<dbReference type="NCBIfam" id="NF001937">
    <property type="entry name" value="PRK00714.1-4"/>
    <property type="match status" value="1"/>
</dbReference>
<dbReference type="NCBIfam" id="NF001938">
    <property type="entry name" value="PRK00714.1-5"/>
    <property type="match status" value="1"/>
</dbReference>
<dbReference type="PANTHER" id="PTHR23114">
    <property type="entry name" value="M7GPPPN-MRNA HYDROLASE"/>
    <property type="match status" value="1"/>
</dbReference>
<dbReference type="PANTHER" id="PTHR23114:SF17">
    <property type="entry name" value="M7GPPPN-MRNA HYDROLASE"/>
    <property type="match status" value="1"/>
</dbReference>
<dbReference type="Pfam" id="PF00293">
    <property type="entry name" value="NUDIX"/>
    <property type="match status" value="1"/>
</dbReference>
<dbReference type="PRINTS" id="PR00502">
    <property type="entry name" value="NUDIXFAMILY"/>
</dbReference>
<dbReference type="SUPFAM" id="SSF55811">
    <property type="entry name" value="Nudix"/>
    <property type="match status" value="1"/>
</dbReference>
<dbReference type="PROSITE" id="PS51462">
    <property type="entry name" value="NUDIX"/>
    <property type="match status" value="1"/>
</dbReference>
<dbReference type="PROSITE" id="PS00893">
    <property type="entry name" value="NUDIX_BOX"/>
    <property type="match status" value="1"/>
</dbReference>
<reference key="1">
    <citation type="journal article" date="2009" name="Genome Biol.">
        <title>Genomic and genetic analyses of diversity and plant interactions of Pseudomonas fluorescens.</title>
        <authorList>
            <person name="Silby M.W."/>
            <person name="Cerdeno-Tarraga A.M."/>
            <person name="Vernikos G.S."/>
            <person name="Giddens S.R."/>
            <person name="Jackson R.W."/>
            <person name="Preston G.M."/>
            <person name="Zhang X.-X."/>
            <person name="Moon C.D."/>
            <person name="Gehrig S.M."/>
            <person name="Godfrey S.A.C."/>
            <person name="Knight C.G."/>
            <person name="Malone J.G."/>
            <person name="Robinson Z."/>
            <person name="Spiers A.J."/>
            <person name="Harris S."/>
            <person name="Challis G.L."/>
            <person name="Yaxley A.M."/>
            <person name="Harris D."/>
            <person name="Seeger K."/>
            <person name="Murphy L."/>
            <person name="Rutter S."/>
            <person name="Squares R."/>
            <person name="Quail M.A."/>
            <person name="Saunders E."/>
            <person name="Mavromatis K."/>
            <person name="Brettin T.S."/>
            <person name="Bentley S.D."/>
            <person name="Hothersall J."/>
            <person name="Stephens E."/>
            <person name="Thomas C.M."/>
            <person name="Parkhill J."/>
            <person name="Levy S.B."/>
            <person name="Rainey P.B."/>
            <person name="Thomson N.R."/>
        </authorList>
    </citation>
    <scope>NUCLEOTIDE SEQUENCE [LARGE SCALE GENOMIC DNA]</scope>
    <source>
        <strain>SBW25</strain>
    </source>
</reference>
<proteinExistence type="inferred from homology"/>
<keyword id="KW-0378">Hydrolase</keyword>
<keyword id="KW-0479">Metal-binding</keyword>
<gene>
    <name evidence="1" type="primary">rppH</name>
    <name evidence="1" type="synonym">nudH</name>
    <name type="ordered locus">PFLU_5820</name>
</gene>
<sequence length="159" mass="18835">MIDPDGFRPNVGIILTNDAGQVLWARRINQDAWQFPQGGINPDETPEDALYRELNEEVGLEREDVQILACTRGWLRYRLPQRLVRTHSQPLCIGQKQKWFLLRLISNEQRVRMDLTGKPEFDGWRWVSYWYPLGQVVTFKREVYRRALKELAPRLLARD</sequence>
<accession>C3K3R3</accession>
<feature type="chain" id="PRO_1000204937" description="RNA pyrophosphohydrolase">
    <location>
        <begin position="1"/>
        <end position="159"/>
    </location>
</feature>
<feature type="domain" description="Nudix hydrolase" evidence="1">
    <location>
        <begin position="6"/>
        <end position="149"/>
    </location>
</feature>
<feature type="short sequence motif" description="Nudix box">
    <location>
        <begin position="38"/>
        <end position="59"/>
    </location>
</feature>